<dbReference type="EMBL" id="L07045">
    <property type="protein sequence ID" value="AAA30045.1"/>
    <property type="molecule type" value="mRNA"/>
</dbReference>
<dbReference type="PIR" id="A48836">
    <property type="entry name" value="A48836"/>
</dbReference>
<dbReference type="RefSeq" id="NP_999703.1">
    <property type="nucleotide sequence ID" value="NM_214538.1"/>
</dbReference>
<dbReference type="SMR" id="P49013"/>
<dbReference type="STRING" id="7668.P49013"/>
<dbReference type="GlyCosmos" id="P49013">
    <property type="glycosylation" value="3 sites, No reported glycans"/>
</dbReference>
<dbReference type="EnsemblMetazoa" id="NM_214538">
    <property type="protein sequence ID" value="NP_999703"/>
    <property type="gene ID" value="GeneID_373315"/>
</dbReference>
<dbReference type="GeneID" id="373315"/>
<dbReference type="KEGG" id="spu:373315"/>
<dbReference type="CTD" id="373315"/>
<dbReference type="eggNOG" id="KOG1217">
    <property type="taxonomic scope" value="Eukaryota"/>
</dbReference>
<dbReference type="InParanoid" id="P49013"/>
<dbReference type="OrthoDB" id="430340at2759"/>
<dbReference type="PhylomeDB" id="P49013"/>
<dbReference type="Proteomes" id="UP000007110">
    <property type="component" value="Unassembled WGS sequence"/>
</dbReference>
<dbReference type="GO" id="GO:0005576">
    <property type="term" value="C:extracellular region"/>
    <property type="evidence" value="ECO:0007669"/>
    <property type="project" value="UniProtKB-SubCell"/>
</dbReference>
<dbReference type="GO" id="GO:0009374">
    <property type="term" value="F:biotin binding"/>
    <property type="evidence" value="ECO:0007669"/>
    <property type="project" value="InterPro"/>
</dbReference>
<dbReference type="GO" id="GO:0005509">
    <property type="term" value="F:calcium ion binding"/>
    <property type="evidence" value="ECO:0007669"/>
    <property type="project" value="InterPro"/>
</dbReference>
<dbReference type="CDD" id="cd00041">
    <property type="entry name" value="CUB"/>
    <property type="match status" value="1"/>
</dbReference>
<dbReference type="CDD" id="cd00054">
    <property type="entry name" value="EGF_CA"/>
    <property type="match status" value="8"/>
</dbReference>
<dbReference type="FunFam" id="2.10.25.10:FF:000230">
    <property type="entry name" value="Delta-like protein"/>
    <property type="match status" value="1"/>
</dbReference>
<dbReference type="FunFam" id="2.10.25.10:FF:000004">
    <property type="entry name" value="Neurogenic locus notch 1"/>
    <property type="match status" value="3"/>
</dbReference>
<dbReference type="FunFam" id="2.10.25.10:FF:000173">
    <property type="entry name" value="Neurogenic locus notch protein 2"/>
    <property type="match status" value="1"/>
</dbReference>
<dbReference type="FunFam" id="2.10.25.10:FF:000122">
    <property type="entry name" value="Protein crumbs homolog 2"/>
    <property type="match status" value="1"/>
</dbReference>
<dbReference type="FunFam" id="2.10.25.10:FF:000321">
    <property type="entry name" value="Protein delta homolog 1"/>
    <property type="match status" value="1"/>
</dbReference>
<dbReference type="FunFam" id="2.10.25.10:FF:000784">
    <property type="entry name" value="Uncharacterized protein"/>
    <property type="match status" value="1"/>
</dbReference>
<dbReference type="Gene3D" id="2.40.128.30">
    <property type="entry name" value="Avidin-like"/>
    <property type="match status" value="1"/>
</dbReference>
<dbReference type="Gene3D" id="2.10.25.10">
    <property type="entry name" value="Laminin"/>
    <property type="match status" value="8"/>
</dbReference>
<dbReference type="Gene3D" id="2.60.120.290">
    <property type="entry name" value="Spermadhesin, CUB domain"/>
    <property type="match status" value="1"/>
</dbReference>
<dbReference type="InterPro" id="IPR005469">
    <property type="entry name" value="Avidin"/>
</dbReference>
<dbReference type="InterPro" id="IPR017889">
    <property type="entry name" value="Avidin-like_CS"/>
</dbReference>
<dbReference type="InterPro" id="IPR036896">
    <property type="entry name" value="Avidin-like_sf"/>
</dbReference>
<dbReference type="InterPro" id="IPR005468">
    <property type="entry name" value="Avidin/str"/>
</dbReference>
<dbReference type="InterPro" id="IPR000859">
    <property type="entry name" value="CUB_dom"/>
</dbReference>
<dbReference type="InterPro" id="IPR001881">
    <property type="entry name" value="EGF-like_Ca-bd_dom"/>
</dbReference>
<dbReference type="InterPro" id="IPR000742">
    <property type="entry name" value="EGF-like_dom"/>
</dbReference>
<dbReference type="InterPro" id="IPR000152">
    <property type="entry name" value="EGF-type_Asp/Asn_hydroxyl_site"/>
</dbReference>
<dbReference type="InterPro" id="IPR018097">
    <property type="entry name" value="EGF_Ca-bd_CS"/>
</dbReference>
<dbReference type="InterPro" id="IPR009030">
    <property type="entry name" value="Growth_fac_rcpt_cys_sf"/>
</dbReference>
<dbReference type="InterPro" id="IPR035914">
    <property type="entry name" value="Sperma_CUB_dom_sf"/>
</dbReference>
<dbReference type="PANTHER" id="PTHR12916">
    <property type="entry name" value="CYTOCHROME C OXIDASE POLYPEPTIDE VIC-2"/>
    <property type="match status" value="1"/>
</dbReference>
<dbReference type="PANTHER" id="PTHR12916:SF4">
    <property type="entry name" value="UNINFLATABLE, ISOFORM C"/>
    <property type="match status" value="1"/>
</dbReference>
<dbReference type="Pfam" id="PF01382">
    <property type="entry name" value="Avidin"/>
    <property type="match status" value="1"/>
</dbReference>
<dbReference type="Pfam" id="PF00431">
    <property type="entry name" value="CUB"/>
    <property type="match status" value="1"/>
</dbReference>
<dbReference type="Pfam" id="PF00008">
    <property type="entry name" value="EGF"/>
    <property type="match status" value="8"/>
</dbReference>
<dbReference type="PRINTS" id="PR00709">
    <property type="entry name" value="AVIDIN"/>
</dbReference>
<dbReference type="PRINTS" id="PR00010">
    <property type="entry name" value="EGFBLOOD"/>
</dbReference>
<dbReference type="SMART" id="SM00042">
    <property type="entry name" value="CUB"/>
    <property type="match status" value="1"/>
</dbReference>
<dbReference type="SMART" id="SM00181">
    <property type="entry name" value="EGF"/>
    <property type="match status" value="8"/>
</dbReference>
<dbReference type="SMART" id="SM00179">
    <property type="entry name" value="EGF_CA"/>
    <property type="match status" value="8"/>
</dbReference>
<dbReference type="SUPFAM" id="SSF50876">
    <property type="entry name" value="Avidin/streptavidin"/>
    <property type="match status" value="1"/>
</dbReference>
<dbReference type="SUPFAM" id="SSF57196">
    <property type="entry name" value="EGF/Laminin"/>
    <property type="match status" value="2"/>
</dbReference>
<dbReference type="SUPFAM" id="SSF57184">
    <property type="entry name" value="Growth factor receptor domain"/>
    <property type="match status" value="2"/>
</dbReference>
<dbReference type="SUPFAM" id="SSF49854">
    <property type="entry name" value="Spermadhesin, CUB domain"/>
    <property type="match status" value="1"/>
</dbReference>
<dbReference type="PROSITE" id="PS00010">
    <property type="entry name" value="ASX_HYDROXYL"/>
    <property type="match status" value="8"/>
</dbReference>
<dbReference type="PROSITE" id="PS00577">
    <property type="entry name" value="AVIDIN_1"/>
    <property type="match status" value="1"/>
</dbReference>
<dbReference type="PROSITE" id="PS51326">
    <property type="entry name" value="AVIDIN_2"/>
    <property type="match status" value="1"/>
</dbReference>
<dbReference type="PROSITE" id="PS01180">
    <property type="entry name" value="CUB"/>
    <property type="match status" value="1"/>
</dbReference>
<dbReference type="PROSITE" id="PS00022">
    <property type="entry name" value="EGF_1"/>
    <property type="match status" value="8"/>
</dbReference>
<dbReference type="PROSITE" id="PS01186">
    <property type="entry name" value="EGF_2"/>
    <property type="match status" value="7"/>
</dbReference>
<dbReference type="PROSITE" id="PS50026">
    <property type="entry name" value="EGF_3"/>
    <property type="match status" value="8"/>
</dbReference>
<dbReference type="PROSITE" id="PS01187">
    <property type="entry name" value="EGF_CA"/>
    <property type="match status" value="6"/>
</dbReference>
<comment type="function">
    <text>Forms the apical lamina, a component of the extracellular matrix.</text>
</comment>
<comment type="subunit">
    <text evidence="5 6">Homotetramer.</text>
</comment>
<comment type="subcellular location">
    <subcellularLocation>
        <location>Secreted</location>
        <location>Extracellular space</location>
    </subcellularLocation>
</comment>
<comment type="developmental stage">
    <text>Low levels in unfertilized eggs and during early cleavage, then rapidly increases in abundance between late morula and mesenchyme blastula stages to maximal levels maintained through subsequent stages.</text>
</comment>
<comment type="miscellaneous">
    <text>Expressed both maternally and zygotically.</text>
</comment>
<gene>
    <name type="primary">EGF3</name>
</gene>
<sequence>MKVSLLAVLLLSIVAATYGQGECGSNPCENGSVCRDGEGTYICECQMGYDGQNCDRFTGANCGYNIFESTGVIESPNYPANYNNRADCLYLVRIKGARVITFTIEDFATEIFKDAVEYGVGPVADFNQALATFEGNLTANNQVPPPFSVQGEQAWFIFSTDRNIPRKGFRITFSSDGDDCTPNPCLNGATCVDQVNDYQCICAPGFTGDNCETDIDECASAPCRNGGACVDQVNGYTCNCIPGFNGVNCENNINECASIPCLNGGICVDGINQFACTCLPGYTGILCETDINECASSPCQNGGSCTDAVNRYTCDCRAGFTGSNCETNINECASSPCLNGGSCLDGVDGYVCQCLPNYTGTHCEISLDACASLPCQNGGVCTNVGGDYVCECLPGYTGINCEIDINECASLPCQNGGECINGIAMYICQCRQGYAGVNCEEVGFCDLEGVWFNECNDQITIIKTSTGMMLGDHMTFTERELGVAAPTVMVGYPSNNYDFPSFGITVVRDNGRTTTSWTGQCHLCDGQEVLYTTWIESSMVSTCEEIKRANKVGQDKWTRYEQSFAPQPDA</sequence>
<organism>
    <name type="scientific">Strongylocentrotus purpuratus</name>
    <name type="common">Purple sea urchin</name>
    <dbReference type="NCBI Taxonomy" id="7668"/>
    <lineage>
        <taxon>Eukaryota</taxon>
        <taxon>Metazoa</taxon>
        <taxon>Echinodermata</taxon>
        <taxon>Eleutherozoa</taxon>
        <taxon>Echinozoa</taxon>
        <taxon>Echinoidea</taxon>
        <taxon>Euechinoidea</taxon>
        <taxon>Echinacea</taxon>
        <taxon>Camarodonta</taxon>
        <taxon>Echinidea</taxon>
        <taxon>Strongylocentrotidae</taxon>
        <taxon>Strongylocentrotus</taxon>
    </lineage>
</organism>
<reference key="1">
    <citation type="journal article" date="1993" name="Dev. Biol.">
        <title>The SpEGF III gene encodes a member of the fibropellins: EGF repeat-containing proteins that form the apical lamina of the sea urchin embryo.</title>
        <authorList>
            <person name="Bisgrove B.W."/>
            <person name="Raff R.A."/>
        </authorList>
    </citation>
    <scope>NUCLEOTIDE SEQUENCE [MRNA]</scope>
    <source>
        <tissue>Embryo</tissue>
    </source>
</reference>
<reference key="2">
    <citation type="journal article" date="2005" name="Protein Sci.">
        <title>An avidin-like domain that does not bind biotin is adopted for oligomerization by the extracellular mosaic protein fibropellin.</title>
        <authorList>
            <person name="Yanai I."/>
            <person name="Yu Y."/>
            <person name="Zhu X."/>
            <person name="Cantor C.R."/>
            <person name="Weng Z."/>
        </authorList>
    </citation>
    <scope>SUBUNIT</scope>
    <scope>ABSENCE OF BINDING TO AVIDIN</scope>
</reference>
<evidence type="ECO:0000250" key="1"/>
<evidence type="ECO:0000255" key="2"/>
<evidence type="ECO:0000255" key="3">
    <source>
        <dbReference type="PROSITE-ProRule" id="PRU00059"/>
    </source>
</evidence>
<evidence type="ECO:0000255" key="4">
    <source>
        <dbReference type="PROSITE-ProRule" id="PRU00076"/>
    </source>
</evidence>
<evidence type="ECO:0000255" key="5">
    <source>
        <dbReference type="PROSITE-ProRule" id="PRU00656"/>
    </source>
</evidence>
<evidence type="ECO:0000269" key="6">
    <source>
    </source>
</evidence>
<accession>P49013</accession>
<feature type="signal peptide" evidence="2">
    <location>
        <begin position="1"/>
        <end position="17"/>
    </location>
</feature>
<feature type="chain" id="PRO_0000002733" description="Fibropellin-3">
    <location>
        <begin position="18"/>
        <end position="570"/>
    </location>
</feature>
<feature type="domain" description="EGF-like 1" evidence="4">
    <location>
        <begin position="18"/>
        <end position="55"/>
    </location>
</feature>
<feature type="domain" description="CUB" evidence="3">
    <location>
        <begin position="62"/>
        <end position="175"/>
    </location>
</feature>
<feature type="domain" description="EGF-like 2; calcium-binding" evidence="4">
    <location>
        <begin position="176"/>
        <end position="212"/>
    </location>
</feature>
<feature type="domain" description="EGF-like 3; calcium-binding" evidence="4">
    <location>
        <begin position="214"/>
        <end position="250"/>
    </location>
</feature>
<feature type="domain" description="EGF-like 4; calcium-binding" evidence="4">
    <location>
        <begin position="252"/>
        <end position="288"/>
    </location>
</feature>
<feature type="domain" description="EGF-like 5; calcium-binding" evidence="4">
    <location>
        <begin position="290"/>
        <end position="326"/>
    </location>
</feature>
<feature type="domain" description="EGF-like 6; calcium-binding" evidence="4">
    <location>
        <begin position="328"/>
        <end position="364"/>
    </location>
</feature>
<feature type="domain" description="EGF-like 7" evidence="4">
    <location>
        <begin position="366"/>
        <end position="402"/>
    </location>
</feature>
<feature type="domain" description="EGF-like 8; calcium-binding" evidence="4">
    <location>
        <begin position="404"/>
        <end position="440"/>
    </location>
</feature>
<feature type="domain" description="Avidin-like" evidence="5">
    <location>
        <begin position="443"/>
        <end position="562"/>
    </location>
</feature>
<feature type="glycosylation site" description="N-linked (GlcNAc...) asparagine" evidence="2">
    <location>
        <position position="30"/>
    </location>
</feature>
<feature type="glycosylation site" description="N-linked (GlcNAc...) asparagine" evidence="2">
    <location>
        <position position="136"/>
    </location>
</feature>
<feature type="glycosylation site" description="N-linked (GlcNAc...) asparagine" evidence="2">
    <location>
        <position position="357"/>
    </location>
</feature>
<feature type="disulfide bond" evidence="1">
    <location>
        <begin position="23"/>
        <end position="34"/>
    </location>
</feature>
<feature type="disulfide bond" evidence="1">
    <location>
        <begin position="28"/>
        <end position="43"/>
    </location>
</feature>
<feature type="disulfide bond" evidence="1">
    <location>
        <begin position="45"/>
        <end position="54"/>
    </location>
</feature>
<feature type="disulfide bond" evidence="1">
    <location>
        <begin position="62"/>
        <end position="88"/>
    </location>
</feature>
<feature type="disulfide bond" evidence="1">
    <location>
        <begin position="180"/>
        <end position="191"/>
    </location>
</feature>
<feature type="disulfide bond" evidence="1">
    <location>
        <begin position="185"/>
        <end position="200"/>
    </location>
</feature>
<feature type="disulfide bond" evidence="1">
    <location>
        <begin position="202"/>
        <end position="211"/>
    </location>
</feature>
<feature type="disulfide bond" evidence="1">
    <location>
        <begin position="218"/>
        <end position="229"/>
    </location>
</feature>
<feature type="disulfide bond" evidence="1">
    <location>
        <begin position="223"/>
        <end position="238"/>
    </location>
</feature>
<feature type="disulfide bond" evidence="1">
    <location>
        <begin position="240"/>
        <end position="249"/>
    </location>
</feature>
<feature type="disulfide bond" evidence="1">
    <location>
        <begin position="256"/>
        <end position="267"/>
    </location>
</feature>
<feature type="disulfide bond" evidence="1">
    <location>
        <begin position="261"/>
        <end position="276"/>
    </location>
</feature>
<feature type="disulfide bond" evidence="1">
    <location>
        <begin position="278"/>
        <end position="287"/>
    </location>
</feature>
<feature type="disulfide bond" evidence="1">
    <location>
        <begin position="294"/>
        <end position="305"/>
    </location>
</feature>
<feature type="disulfide bond" evidence="1">
    <location>
        <begin position="299"/>
        <end position="314"/>
    </location>
</feature>
<feature type="disulfide bond" evidence="1">
    <location>
        <begin position="316"/>
        <end position="325"/>
    </location>
</feature>
<feature type="disulfide bond" evidence="1">
    <location>
        <begin position="332"/>
        <end position="343"/>
    </location>
</feature>
<feature type="disulfide bond" evidence="1">
    <location>
        <begin position="337"/>
        <end position="352"/>
    </location>
</feature>
<feature type="disulfide bond" evidence="1">
    <location>
        <begin position="354"/>
        <end position="363"/>
    </location>
</feature>
<feature type="disulfide bond" evidence="1">
    <location>
        <begin position="370"/>
        <end position="381"/>
    </location>
</feature>
<feature type="disulfide bond" evidence="1">
    <location>
        <begin position="375"/>
        <end position="390"/>
    </location>
</feature>
<feature type="disulfide bond" evidence="1">
    <location>
        <begin position="392"/>
        <end position="401"/>
    </location>
</feature>
<feature type="disulfide bond" evidence="1">
    <location>
        <begin position="408"/>
        <end position="419"/>
    </location>
</feature>
<feature type="disulfide bond" evidence="1">
    <location>
        <begin position="413"/>
        <end position="428"/>
    </location>
</feature>
<feature type="disulfide bond" evidence="1">
    <location>
        <begin position="430"/>
        <end position="439"/>
    </location>
</feature>
<feature type="disulfide bond" evidence="5">
    <location>
        <begin position="445"/>
        <end position="521"/>
    </location>
</feature>
<protein>
    <recommendedName>
        <fullName>Fibropellin-3</fullName>
    </recommendedName>
    <alternativeName>
        <fullName>Epidermal growth factor-related protein 3</fullName>
    </alternativeName>
    <alternativeName>
        <fullName>Fibropellin III</fullName>
    </alternativeName>
    <alternativeName>
        <fullName>Fibropellin-c</fullName>
    </alternativeName>
    <alternativeName>
        <fullName>SpEGF III</fullName>
    </alternativeName>
</protein>
<keyword id="KW-0106">Calcium</keyword>
<keyword id="KW-1015">Disulfide bond</keyword>
<keyword id="KW-0245">EGF-like domain</keyword>
<keyword id="KW-0325">Glycoprotein</keyword>
<keyword id="KW-1185">Reference proteome</keyword>
<keyword id="KW-0677">Repeat</keyword>
<keyword id="KW-0964">Secreted</keyword>
<keyword id="KW-0732">Signal</keyword>
<name>FBP3_STRPU</name>
<proteinExistence type="evidence at protein level"/>